<gene>
    <name type="primary">PHT4;1</name>
    <name type="ordered locus">Os01g0279700</name>
    <name type="ordered locus">LOC_Os01g17240</name>
    <name type="ORF">OsJ_01311</name>
    <name type="ORF">OSJNBa0036E02.3</name>
    <name type="ORF">P0003H10.9</name>
</gene>
<name>PHT41_ORYSJ</name>
<protein>
    <recommendedName>
        <fullName>Probable anion transporter 1, chloroplastic</fullName>
    </recommendedName>
    <alternativeName>
        <fullName>Phosphate transporter 4;1</fullName>
    </alternativeName>
</protein>
<organism>
    <name type="scientific">Oryza sativa subsp. japonica</name>
    <name type="common">Rice</name>
    <dbReference type="NCBI Taxonomy" id="39947"/>
    <lineage>
        <taxon>Eukaryota</taxon>
        <taxon>Viridiplantae</taxon>
        <taxon>Streptophyta</taxon>
        <taxon>Embryophyta</taxon>
        <taxon>Tracheophyta</taxon>
        <taxon>Spermatophyta</taxon>
        <taxon>Magnoliopsida</taxon>
        <taxon>Liliopsida</taxon>
        <taxon>Poales</taxon>
        <taxon>Poaceae</taxon>
        <taxon>BOP clade</taxon>
        <taxon>Oryzoideae</taxon>
        <taxon>Oryzeae</taxon>
        <taxon>Oryzinae</taxon>
        <taxon>Oryza</taxon>
        <taxon>Oryza sativa</taxon>
    </lineage>
</organism>
<evidence type="ECO:0000250" key="1"/>
<evidence type="ECO:0000255" key="2"/>
<evidence type="ECO:0000256" key="3">
    <source>
        <dbReference type="SAM" id="MobiDB-lite"/>
    </source>
</evidence>
<evidence type="ECO:0000305" key="4"/>
<accession>Q9SDI4</accession>
<accession>A0A0N7KCR9</accession>
<comment type="function">
    <text evidence="1">Probable anion transporter.</text>
</comment>
<comment type="subcellular location">
    <subcellularLocation>
        <location evidence="4">Plastid</location>
        <location evidence="4">Chloroplast membrane</location>
        <topology evidence="4">Multi-pass membrane protein</topology>
    </subcellularLocation>
</comment>
<comment type="similarity">
    <text evidence="4">Belongs to the major facilitator superfamily. Sodium/anion cotransporter (TC 2.A.1.14) family.</text>
</comment>
<reference key="1">
    <citation type="journal article" date="2002" name="Nature">
        <title>The genome sequence and structure of rice chromosome 1.</title>
        <authorList>
            <person name="Sasaki T."/>
            <person name="Matsumoto T."/>
            <person name="Yamamoto K."/>
            <person name="Sakata K."/>
            <person name="Baba T."/>
            <person name="Katayose Y."/>
            <person name="Wu J."/>
            <person name="Niimura Y."/>
            <person name="Cheng Z."/>
            <person name="Nagamura Y."/>
            <person name="Antonio B.A."/>
            <person name="Kanamori H."/>
            <person name="Hosokawa S."/>
            <person name="Masukawa M."/>
            <person name="Arikawa K."/>
            <person name="Chiden Y."/>
            <person name="Hayashi M."/>
            <person name="Okamoto M."/>
            <person name="Ando T."/>
            <person name="Aoki H."/>
            <person name="Arita K."/>
            <person name="Hamada M."/>
            <person name="Harada C."/>
            <person name="Hijishita S."/>
            <person name="Honda M."/>
            <person name="Ichikawa Y."/>
            <person name="Idonuma A."/>
            <person name="Iijima M."/>
            <person name="Ikeda M."/>
            <person name="Ikeno M."/>
            <person name="Ito S."/>
            <person name="Ito T."/>
            <person name="Ito Y."/>
            <person name="Ito Y."/>
            <person name="Iwabuchi A."/>
            <person name="Kamiya K."/>
            <person name="Karasawa W."/>
            <person name="Katagiri S."/>
            <person name="Kikuta A."/>
            <person name="Kobayashi N."/>
            <person name="Kono I."/>
            <person name="Machita K."/>
            <person name="Maehara T."/>
            <person name="Mizuno H."/>
            <person name="Mizubayashi T."/>
            <person name="Mukai Y."/>
            <person name="Nagasaki H."/>
            <person name="Nakashima M."/>
            <person name="Nakama Y."/>
            <person name="Nakamichi Y."/>
            <person name="Nakamura M."/>
            <person name="Namiki N."/>
            <person name="Negishi M."/>
            <person name="Ohta I."/>
            <person name="Ono N."/>
            <person name="Saji S."/>
            <person name="Sakai K."/>
            <person name="Shibata M."/>
            <person name="Shimokawa T."/>
            <person name="Shomura A."/>
            <person name="Song J."/>
            <person name="Takazaki Y."/>
            <person name="Terasawa K."/>
            <person name="Tsuji K."/>
            <person name="Waki K."/>
            <person name="Yamagata H."/>
            <person name="Yamane H."/>
            <person name="Yoshiki S."/>
            <person name="Yoshihara R."/>
            <person name="Yukawa K."/>
            <person name="Zhong H."/>
            <person name="Iwama H."/>
            <person name="Endo T."/>
            <person name="Ito H."/>
            <person name="Hahn J.H."/>
            <person name="Kim H.-I."/>
            <person name="Eun M.-Y."/>
            <person name="Yano M."/>
            <person name="Jiang J."/>
            <person name="Gojobori T."/>
        </authorList>
    </citation>
    <scope>NUCLEOTIDE SEQUENCE [LARGE SCALE GENOMIC DNA]</scope>
    <source>
        <strain>cv. Nipponbare</strain>
    </source>
</reference>
<reference key="2">
    <citation type="journal article" date="2005" name="Nature">
        <title>The map-based sequence of the rice genome.</title>
        <authorList>
            <consortium name="International rice genome sequencing project (IRGSP)"/>
        </authorList>
    </citation>
    <scope>NUCLEOTIDE SEQUENCE [LARGE SCALE GENOMIC DNA]</scope>
    <source>
        <strain>cv. Nipponbare</strain>
    </source>
</reference>
<reference key="3">
    <citation type="journal article" date="2008" name="Nucleic Acids Res.">
        <title>The rice annotation project database (RAP-DB): 2008 update.</title>
        <authorList>
            <consortium name="The rice annotation project (RAP)"/>
        </authorList>
    </citation>
    <scope>GENOME REANNOTATION</scope>
    <source>
        <strain>cv. Nipponbare</strain>
    </source>
</reference>
<reference key="4">
    <citation type="journal article" date="2013" name="Rice">
        <title>Improvement of the Oryza sativa Nipponbare reference genome using next generation sequence and optical map data.</title>
        <authorList>
            <person name="Kawahara Y."/>
            <person name="de la Bastide M."/>
            <person name="Hamilton J.P."/>
            <person name="Kanamori H."/>
            <person name="McCombie W.R."/>
            <person name="Ouyang S."/>
            <person name="Schwartz D.C."/>
            <person name="Tanaka T."/>
            <person name="Wu J."/>
            <person name="Zhou S."/>
            <person name="Childs K.L."/>
            <person name="Davidson R.M."/>
            <person name="Lin H."/>
            <person name="Quesada-Ocampo L."/>
            <person name="Vaillancourt B."/>
            <person name="Sakai H."/>
            <person name="Lee S.S."/>
            <person name="Kim J."/>
            <person name="Numa H."/>
            <person name="Itoh T."/>
            <person name="Buell C.R."/>
            <person name="Matsumoto T."/>
        </authorList>
    </citation>
    <scope>GENOME REANNOTATION</scope>
    <source>
        <strain>cv. Nipponbare</strain>
    </source>
</reference>
<reference key="5">
    <citation type="journal article" date="2005" name="PLoS Biol.">
        <title>The genomes of Oryza sativa: a history of duplications.</title>
        <authorList>
            <person name="Yu J."/>
            <person name="Wang J."/>
            <person name="Lin W."/>
            <person name="Li S."/>
            <person name="Li H."/>
            <person name="Zhou J."/>
            <person name="Ni P."/>
            <person name="Dong W."/>
            <person name="Hu S."/>
            <person name="Zeng C."/>
            <person name="Zhang J."/>
            <person name="Zhang Y."/>
            <person name="Li R."/>
            <person name="Xu Z."/>
            <person name="Li S."/>
            <person name="Li X."/>
            <person name="Zheng H."/>
            <person name="Cong L."/>
            <person name="Lin L."/>
            <person name="Yin J."/>
            <person name="Geng J."/>
            <person name="Li G."/>
            <person name="Shi J."/>
            <person name="Liu J."/>
            <person name="Lv H."/>
            <person name="Li J."/>
            <person name="Wang J."/>
            <person name="Deng Y."/>
            <person name="Ran L."/>
            <person name="Shi X."/>
            <person name="Wang X."/>
            <person name="Wu Q."/>
            <person name="Li C."/>
            <person name="Ren X."/>
            <person name="Wang J."/>
            <person name="Wang X."/>
            <person name="Li D."/>
            <person name="Liu D."/>
            <person name="Zhang X."/>
            <person name="Ji Z."/>
            <person name="Zhao W."/>
            <person name="Sun Y."/>
            <person name="Zhang Z."/>
            <person name="Bao J."/>
            <person name="Han Y."/>
            <person name="Dong L."/>
            <person name="Ji J."/>
            <person name="Chen P."/>
            <person name="Wu S."/>
            <person name="Liu J."/>
            <person name="Xiao Y."/>
            <person name="Bu D."/>
            <person name="Tan J."/>
            <person name="Yang L."/>
            <person name="Ye C."/>
            <person name="Zhang J."/>
            <person name="Xu J."/>
            <person name="Zhou Y."/>
            <person name="Yu Y."/>
            <person name="Zhang B."/>
            <person name="Zhuang S."/>
            <person name="Wei H."/>
            <person name="Liu B."/>
            <person name="Lei M."/>
            <person name="Yu H."/>
            <person name="Li Y."/>
            <person name="Xu H."/>
            <person name="Wei S."/>
            <person name="He X."/>
            <person name="Fang L."/>
            <person name="Zhang Z."/>
            <person name="Zhang Y."/>
            <person name="Huang X."/>
            <person name="Su Z."/>
            <person name="Tong W."/>
            <person name="Li J."/>
            <person name="Tong Z."/>
            <person name="Li S."/>
            <person name="Ye J."/>
            <person name="Wang L."/>
            <person name="Fang L."/>
            <person name="Lei T."/>
            <person name="Chen C.-S."/>
            <person name="Chen H.-C."/>
            <person name="Xu Z."/>
            <person name="Li H."/>
            <person name="Huang H."/>
            <person name="Zhang F."/>
            <person name="Xu H."/>
            <person name="Li N."/>
            <person name="Zhao C."/>
            <person name="Li S."/>
            <person name="Dong L."/>
            <person name="Huang Y."/>
            <person name="Li L."/>
            <person name="Xi Y."/>
            <person name="Qi Q."/>
            <person name="Li W."/>
            <person name="Zhang B."/>
            <person name="Hu W."/>
            <person name="Zhang Y."/>
            <person name="Tian X."/>
            <person name="Jiao Y."/>
            <person name="Liang X."/>
            <person name="Jin J."/>
            <person name="Gao L."/>
            <person name="Zheng W."/>
            <person name="Hao B."/>
            <person name="Liu S.-M."/>
            <person name="Wang W."/>
            <person name="Yuan L."/>
            <person name="Cao M."/>
            <person name="McDermott J."/>
            <person name="Samudrala R."/>
            <person name="Wang J."/>
            <person name="Wong G.K.-S."/>
            <person name="Yang H."/>
        </authorList>
    </citation>
    <scope>NUCLEOTIDE SEQUENCE [LARGE SCALE GENOMIC DNA]</scope>
    <source>
        <strain>cv. Nipponbare</strain>
    </source>
</reference>
<reference key="6">
    <citation type="journal article" date="2003" name="Science">
        <title>Collection, mapping, and annotation of over 28,000 cDNA clones from japonica rice.</title>
        <authorList>
            <consortium name="The rice full-length cDNA consortium"/>
        </authorList>
    </citation>
    <scope>NUCLEOTIDE SEQUENCE [LARGE SCALE MRNA]</scope>
    <source>
        <strain>cv. Nipponbare</strain>
    </source>
</reference>
<reference key="7">
    <citation type="journal article" date="2008" name="Plant Signal. Behav.">
        <title>Differential expression and phylogenetic analysis suggest specialization of plastid-localized members of the PHT4 phosphate transporter family for photosynthetic and heterotrophic tissues.</title>
        <authorList>
            <person name="Guo B."/>
            <person name="Irigoyen S."/>
            <person name="Fowler T.B."/>
            <person name="Versaw W.K."/>
        </authorList>
    </citation>
    <scope>GENE FAMILY</scope>
    <scope>NOMENCLATURE</scope>
</reference>
<dbReference type="EMBL" id="AP000815">
    <property type="protein sequence ID" value="BAA87831.1"/>
    <property type="molecule type" value="Genomic_DNA"/>
</dbReference>
<dbReference type="EMBL" id="AP002862">
    <property type="protein sequence ID" value="BAB17729.1"/>
    <property type="molecule type" value="Genomic_DNA"/>
</dbReference>
<dbReference type="EMBL" id="AP008207">
    <property type="protein sequence ID" value="BAF04663.1"/>
    <property type="molecule type" value="Genomic_DNA"/>
</dbReference>
<dbReference type="EMBL" id="AP014957">
    <property type="protein sequence ID" value="BAS71585.1"/>
    <property type="molecule type" value="Genomic_DNA"/>
</dbReference>
<dbReference type="EMBL" id="CM000138">
    <property type="protein sequence ID" value="EEE54336.1"/>
    <property type="molecule type" value="Genomic_DNA"/>
</dbReference>
<dbReference type="EMBL" id="AK067683">
    <property type="protein sequence ID" value="BAG90539.1"/>
    <property type="molecule type" value="mRNA"/>
</dbReference>
<dbReference type="EMBL" id="AK100107">
    <property type="protein sequence ID" value="BAG94450.1"/>
    <property type="molecule type" value="mRNA"/>
</dbReference>
<dbReference type="RefSeq" id="NP_001393219.1">
    <property type="nucleotide sequence ID" value="NM_001406290.1"/>
</dbReference>
<dbReference type="RefSeq" id="XP_015648040.1">
    <property type="nucleotide sequence ID" value="XM_015792554.1"/>
</dbReference>
<dbReference type="SMR" id="Q9SDI4"/>
<dbReference type="FunCoup" id="Q9SDI4">
    <property type="interactions" value="596"/>
</dbReference>
<dbReference type="STRING" id="39947.Q9SDI4"/>
<dbReference type="PaxDb" id="39947-Q9SDI4"/>
<dbReference type="EnsemblPlants" id="Os01t0279700-01">
    <property type="protein sequence ID" value="Os01t0279700-01"/>
    <property type="gene ID" value="Os01g0279700"/>
</dbReference>
<dbReference type="EnsemblPlants" id="Os01t0279700-02">
    <property type="protein sequence ID" value="Os01t0279700-02"/>
    <property type="gene ID" value="Os01g0279700"/>
</dbReference>
<dbReference type="GeneID" id="4326905"/>
<dbReference type="Gramene" id="Os01t0279700-01">
    <property type="protein sequence ID" value="Os01t0279700-01"/>
    <property type="gene ID" value="Os01g0279700"/>
</dbReference>
<dbReference type="Gramene" id="Os01t0279700-02">
    <property type="protein sequence ID" value="Os01t0279700-02"/>
    <property type="gene ID" value="Os01g0279700"/>
</dbReference>
<dbReference type="KEGG" id="dosa:Os01g0279700"/>
<dbReference type="eggNOG" id="KOG2532">
    <property type="taxonomic scope" value="Eukaryota"/>
</dbReference>
<dbReference type="HOGENOM" id="CLU_001265_5_11_1"/>
<dbReference type="InParanoid" id="Q9SDI4"/>
<dbReference type="OMA" id="RVVTTWF"/>
<dbReference type="OrthoDB" id="2250022at2759"/>
<dbReference type="Proteomes" id="UP000000763">
    <property type="component" value="Chromosome 1"/>
</dbReference>
<dbReference type="Proteomes" id="UP000007752">
    <property type="component" value="Chromosome 1"/>
</dbReference>
<dbReference type="Proteomes" id="UP000059680">
    <property type="component" value="Chromosome 1"/>
</dbReference>
<dbReference type="GO" id="GO:0031969">
    <property type="term" value="C:chloroplast membrane"/>
    <property type="evidence" value="ECO:0007669"/>
    <property type="project" value="UniProtKB-SubCell"/>
</dbReference>
<dbReference type="GO" id="GO:0005315">
    <property type="term" value="F:phosphate transmembrane transporter activity"/>
    <property type="evidence" value="ECO:0007669"/>
    <property type="project" value="UniProtKB-ARBA"/>
</dbReference>
<dbReference type="GO" id="GO:0006811">
    <property type="term" value="P:monoatomic ion transport"/>
    <property type="evidence" value="ECO:0007669"/>
    <property type="project" value="UniProtKB-KW"/>
</dbReference>
<dbReference type="CDD" id="cd17380">
    <property type="entry name" value="MFS_SLC17A9_like"/>
    <property type="match status" value="1"/>
</dbReference>
<dbReference type="FunFam" id="1.20.1250.20:FF:000058">
    <property type="entry name" value="ascorbate transporter, chloroplastic isoform X1"/>
    <property type="match status" value="1"/>
</dbReference>
<dbReference type="FunFam" id="1.20.1250.20:FF:000086">
    <property type="entry name" value="ascorbate transporter, chloroplastic isoform X2"/>
    <property type="match status" value="1"/>
</dbReference>
<dbReference type="Gene3D" id="1.20.1250.20">
    <property type="entry name" value="MFS general substrate transporter like domains"/>
    <property type="match status" value="2"/>
</dbReference>
<dbReference type="InterPro" id="IPR011701">
    <property type="entry name" value="MFS"/>
</dbReference>
<dbReference type="InterPro" id="IPR020846">
    <property type="entry name" value="MFS_dom"/>
</dbReference>
<dbReference type="InterPro" id="IPR050382">
    <property type="entry name" value="MFS_Na/Anion_cotransporter"/>
</dbReference>
<dbReference type="InterPro" id="IPR036259">
    <property type="entry name" value="MFS_trans_sf"/>
</dbReference>
<dbReference type="InterPro" id="IPR044777">
    <property type="entry name" value="SLC17A9-like"/>
</dbReference>
<dbReference type="PANTHER" id="PTHR11662:SF446">
    <property type="entry name" value="SODIUM-DEPENDENT PHOSPHATE TRANSPORT PROTEIN 1, CHLOROPLASTIC"/>
    <property type="match status" value="1"/>
</dbReference>
<dbReference type="PANTHER" id="PTHR11662">
    <property type="entry name" value="SOLUTE CARRIER FAMILY 17"/>
    <property type="match status" value="1"/>
</dbReference>
<dbReference type="Pfam" id="PF07690">
    <property type="entry name" value="MFS_1"/>
    <property type="match status" value="1"/>
</dbReference>
<dbReference type="SUPFAM" id="SSF103473">
    <property type="entry name" value="MFS general substrate transporter"/>
    <property type="match status" value="1"/>
</dbReference>
<dbReference type="PROSITE" id="PS50850">
    <property type="entry name" value="MFS"/>
    <property type="match status" value="1"/>
</dbReference>
<feature type="transit peptide" description="Chloroplast" evidence="2">
    <location>
        <begin position="1"/>
        <end position="55"/>
    </location>
</feature>
<feature type="chain" id="PRO_0000383099" description="Probable anion transporter 1, chloroplastic">
    <location>
        <begin position="56"/>
        <end position="529"/>
    </location>
</feature>
<feature type="transmembrane region" description="Helical" evidence="2">
    <location>
        <begin position="120"/>
        <end position="140"/>
    </location>
</feature>
<feature type="transmembrane region" description="Helical" evidence="2">
    <location>
        <begin position="158"/>
        <end position="178"/>
    </location>
</feature>
<feature type="transmembrane region" description="Helical" evidence="2">
    <location>
        <begin position="187"/>
        <end position="207"/>
    </location>
</feature>
<feature type="transmembrane region" description="Helical" evidence="2">
    <location>
        <begin position="209"/>
        <end position="229"/>
    </location>
</feature>
<feature type="transmembrane region" description="Helical" evidence="2">
    <location>
        <begin position="251"/>
        <end position="271"/>
    </location>
</feature>
<feature type="transmembrane region" description="Helical" evidence="2">
    <location>
        <begin position="274"/>
        <end position="294"/>
    </location>
</feature>
<feature type="transmembrane region" description="Helical" evidence="2">
    <location>
        <begin position="340"/>
        <end position="360"/>
    </location>
</feature>
<feature type="transmembrane region" description="Helical" evidence="2">
    <location>
        <begin position="378"/>
        <end position="398"/>
    </location>
</feature>
<feature type="transmembrane region" description="Helical" evidence="2">
    <location>
        <begin position="418"/>
        <end position="438"/>
    </location>
</feature>
<feature type="transmembrane region" description="Helical" evidence="2">
    <location>
        <begin position="469"/>
        <end position="489"/>
    </location>
</feature>
<feature type="transmembrane region" description="Helical" evidence="2">
    <location>
        <begin position="503"/>
        <end position="523"/>
    </location>
</feature>
<feature type="region of interest" description="Disordered" evidence="3">
    <location>
        <begin position="13"/>
        <end position="39"/>
    </location>
</feature>
<feature type="region of interest" description="Disordered" evidence="3">
    <location>
        <begin position="52"/>
        <end position="78"/>
    </location>
</feature>
<feature type="compositionally biased region" description="Gly residues" evidence="3">
    <location>
        <begin position="28"/>
        <end position="39"/>
    </location>
</feature>
<feature type="compositionally biased region" description="Basic and acidic residues" evidence="3">
    <location>
        <begin position="67"/>
        <end position="76"/>
    </location>
</feature>
<proteinExistence type="evidence at transcript level"/>
<keyword id="KW-0150">Chloroplast</keyword>
<keyword id="KW-0406">Ion transport</keyword>
<keyword id="KW-0472">Membrane</keyword>
<keyword id="KW-0934">Plastid</keyword>
<keyword id="KW-1185">Reference proteome</keyword>
<keyword id="KW-0809">Transit peptide</keyword>
<keyword id="KW-0812">Transmembrane</keyword>
<keyword id="KW-1133">Transmembrane helix</keyword>
<keyword id="KW-0813">Transport</keyword>
<sequence>MLYLLPLSVSCRVPGSPPAPRSRRFLDPGGGRGVGDGLGGVRVFRRRALRGTDVRSNTSSSSSRKGRHDDARHDGGYGDDGDAGALLASVRRLLLSGSAQDDAAEGEAEEDEQGQFPKRWAIVFLCFSAFLLCNMDRVNMSIAILPMSAEFGWNPQTVGLIQSSFFWGYLLTQIAGGIWADTVGGKTVLGFGVIWWSIATALTPFAAKLGLPFLLVTRAFMGVGEGVAMPAMNNILSKWVPVSERSRSLALVYSGMYLGSVTGLAFSPLLIHNFGWPSVFYSFGSLGVFWFSTWASKAYSSPLEDPGISAEEKKLITSQTTGGEPVKEIPWGLILSKPPVWALIVSHFCHNWGTFILLTWMPTYYNQVLKFNLTESGLFCVLPWLTMAVSANFGGWIADTLVSRGLSVTTVRKIMQSIGFLGPAFFLTQLSHIDSPAMAVLCMACSQGTDAFSQSGLYSNHQDIGPRYAGVLLGLSNTAGVLAGVFGTAATGYILQHGSWDDVFKVSVVLYLVGTLVWNLFSTGEKIID</sequence>